<organism>
    <name type="scientific">Staphylococcus aureus (strain MSSA476)</name>
    <dbReference type="NCBI Taxonomy" id="282459"/>
    <lineage>
        <taxon>Bacteria</taxon>
        <taxon>Bacillati</taxon>
        <taxon>Bacillota</taxon>
        <taxon>Bacilli</taxon>
        <taxon>Bacillales</taxon>
        <taxon>Staphylococcaceae</taxon>
        <taxon>Staphylococcus</taxon>
    </lineage>
</organism>
<reference key="1">
    <citation type="journal article" date="2004" name="Proc. Natl. Acad. Sci. U.S.A.">
        <title>Complete genomes of two clinical Staphylococcus aureus strains: evidence for the rapid evolution of virulence and drug resistance.</title>
        <authorList>
            <person name="Holden M.T.G."/>
            <person name="Feil E.J."/>
            <person name="Lindsay J.A."/>
            <person name="Peacock S.J."/>
            <person name="Day N.P.J."/>
            <person name="Enright M.C."/>
            <person name="Foster T.J."/>
            <person name="Moore C.E."/>
            <person name="Hurst L."/>
            <person name="Atkin R."/>
            <person name="Barron A."/>
            <person name="Bason N."/>
            <person name="Bentley S.D."/>
            <person name="Chillingworth C."/>
            <person name="Chillingworth T."/>
            <person name="Churcher C."/>
            <person name="Clark L."/>
            <person name="Corton C."/>
            <person name="Cronin A."/>
            <person name="Doggett J."/>
            <person name="Dowd L."/>
            <person name="Feltwell T."/>
            <person name="Hance Z."/>
            <person name="Harris B."/>
            <person name="Hauser H."/>
            <person name="Holroyd S."/>
            <person name="Jagels K."/>
            <person name="James K.D."/>
            <person name="Lennard N."/>
            <person name="Line A."/>
            <person name="Mayes R."/>
            <person name="Moule S."/>
            <person name="Mungall K."/>
            <person name="Ormond D."/>
            <person name="Quail M.A."/>
            <person name="Rabbinowitsch E."/>
            <person name="Rutherford K.M."/>
            <person name="Sanders M."/>
            <person name="Sharp S."/>
            <person name="Simmonds M."/>
            <person name="Stevens K."/>
            <person name="Whitehead S."/>
            <person name="Barrell B.G."/>
            <person name="Spratt B.G."/>
            <person name="Parkhill J."/>
        </authorList>
    </citation>
    <scope>NUCLEOTIDE SEQUENCE [LARGE SCALE GENOMIC DNA]</scope>
    <source>
        <strain>MSSA476</strain>
    </source>
</reference>
<dbReference type="EMBL" id="BX571857">
    <property type="protein sequence ID" value="CAG43928.1"/>
    <property type="molecule type" value="Genomic_DNA"/>
</dbReference>
<dbReference type="RefSeq" id="WP_000090796.1">
    <property type="nucleotide sequence ID" value="NC_002953.3"/>
</dbReference>
<dbReference type="SMR" id="Q6G795"/>
<dbReference type="GeneID" id="66840438"/>
<dbReference type="KEGG" id="sas:SAS2117"/>
<dbReference type="HOGENOM" id="CLU_103849_1_1_9"/>
<dbReference type="GO" id="GO:0005829">
    <property type="term" value="C:cytosol"/>
    <property type="evidence" value="ECO:0007669"/>
    <property type="project" value="TreeGrafter"/>
</dbReference>
<dbReference type="GO" id="GO:0015935">
    <property type="term" value="C:small ribosomal subunit"/>
    <property type="evidence" value="ECO:0007669"/>
    <property type="project" value="TreeGrafter"/>
</dbReference>
<dbReference type="GO" id="GO:0019843">
    <property type="term" value="F:rRNA binding"/>
    <property type="evidence" value="ECO:0007669"/>
    <property type="project" value="UniProtKB-UniRule"/>
</dbReference>
<dbReference type="GO" id="GO:0003735">
    <property type="term" value="F:structural constituent of ribosome"/>
    <property type="evidence" value="ECO:0007669"/>
    <property type="project" value="InterPro"/>
</dbReference>
<dbReference type="GO" id="GO:0000049">
    <property type="term" value="F:tRNA binding"/>
    <property type="evidence" value="ECO:0007669"/>
    <property type="project" value="UniProtKB-UniRule"/>
</dbReference>
<dbReference type="GO" id="GO:0006412">
    <property type="term" value="P:translation"/>
    <property type="evidence" value="ECO:0007669"/>
    <property type="project" value="UniProtKB-UniRule"/>
</dbReference>
<dbReference type="FunFam" id="1.10.8.50:FF:000001">
    <property type="entry name" value="30S ribosomal protein S13"/>
    <property type="match status" value="1"/>
</dbReference>
<dbReference type="FunFam" id="4.10.910.10:FF:000001">
    <property type="entry name" value="30S ribosomal protein S13"/>
    <property type="match status" value="1"/>
</dbReference>
<dbReference type="Gene3D" id="1.10.8.50">
    <property type="match status" value="1"/>
</dbReference>
<dbReference type="Gene3D" id="4.10.910.10">
    <property type="entry name" value="30s ribosomal protein s13, domain 2"/>
    <property type="match status" value="1"/>
</dbReference>
<dbReference type="HAMAP" id="MF_01315">
    <property type="entry name" value="Ribosomal_uS13"/>
    <property type="match status" value="1"/>
</dbReference>
<dbReference type="InterPro" id="IPR027437">
    <property type="entry name" value="Rbsml_uS13_C"/>
</dbReference>
<dbReference type="InterPro" id="IPR001892">
    <property type="entry name" value="Ribosomal_uS13"/>
</dbReference>
<dbReference type="InterPro" id="IPR010979">
    <property type="entry name" value="Ribosomal_uS13-like_H2TH"/>
</dbReference>
<dbReference type="InterPro" id="IPR019980">
    <property type="entry name" value="Ribosomal_uS13_bac-type"/>
</dbReference>
<dbReference type="InterPro" id="IPR018269">
    <property type="entry name" value="Ribosomal_uS13_CS"/>
</dbReference>
<dbReference type="NCBIfam" id="TIGR03631">
    <property type="entry name" value="uS13_bact"/>
    <property type="match status" value="1"/>
</dbReference>
<dbReference type="PANTHER" id="PTHR10871">
    <property type="entry name" value="30S RIBOSOMAL PROTEIN S13/40S RIBOSOMAL PROTEIN S18"/>
    <property type="match status" value="1"/>
</dbReference>
<dbReference type="PANTHER" id="PTHR10871:SF1">
    <property type="entry name" value="SMALL RIBOSOMAL SUBUNIT PROTEIN US13M"/>
    <property type="match status" value="1"/>
</dbReference>
<dbReference type="Pfam" id="PF00416">
    <property type="entry name" value="Ribosomal_S13"/>
    <property type="match status" value="1"/>
</dbReference>
<dbReference type="PIRSF" id="PIRSF002134">
    <property type="entry name" value="Ribosomal_S13"/>
    <property type="match status" value="1"/>
</dbReference>
<dbReference type="SUPFAM" id="SSF46946">
    <property type="entry name" value="S13-like H2TH domain"/>
    <property type="match status" value="1"/>
</dbReference>
<dbReference type="PROSITE" id="PS00646">
    <property type="entry name" value="RIBOSOMAL_S13_1"/>
    <property type="match status" value="1"/>
</dbReference>
<dbReference type="PROSITE" id="PS50159">
    <property type="entry name" value="RIBOSOMAL_S13_2"/>
    <property type="match status" value="1"/>
</dbReference>
<protein>
    <recommendedName>
        <fullName evidence="1">Small ribosomal subunit protein uS13</fullName>
    </recommendedName>
    <alternativeName>
        <fullName evidence="3">30S ribosomal protein S13</fullName>
    </alternativeName>
</protein>
<proteinExistence type="inferred from homology"/>
<accession>Q6G795</accession>
<name>RS13_STAAS</name>
<feature type="chain" id="PRO_0000132138" description="Small ribosomal subunit protein uS13">
    <location>
        <begin position="1"/>
        <end position="121"/>
    </location>
</feature>
<feature type="region of interest" description="Disordered" evidence="2">
    <location>
        <begin position="91"/>
        <end position="121"/>
    </location>
</feature>
<keyword id="KW-0687">Ribonucleoprotein</keyword>
<keyword id="KW-0689">Ribosomal protein</keyword>
<keyword id="KW-0694">RNA-binding</keyword>
<keyword id="KW-0699">rRNA-binding</keyword>
<keyword id="KW-0820">tRNA-binding</keyword>
<sequence length="121" mass="13719">MARIAGVDIPREKRVVISLTYIYGIGTSTAQKILEEANVSADTRVKDLTDDELGRIREVVDGYKVEGDLRRETNLNIKRLMEISSYRGIRHRRGLPVRGQKTKNNARTRKGPVKTVANKKK</sequence>
<gene>
    <name evidence="1" type="primary">rpsM</name>
    <name type="ordered locus">SAS2117</name>
</gene>
<comment type="function">
    <text evidence="1">Located at the top of the head of the 30S subunit, it contacts several helices of the 16S rRNA. In the 70S ribosome it contacts the 23S rRNA (bridge B1a) and protein L5 of the 50S subunit (bridge B1b), connecting the 2 subunits; these bridges are implicated in subunit movement. Contacts the tRNAs in the A and P-sites.</text>
</comment>
<comment type="subunit">
    <text evidence="1">Part of the 30S ribosomal subunit. Forms a loose heterodimer with protein S19. Forms two bridges to the 50S subunit in the 70S ribosome.</text>
</comment>
<comment type="similarity">
    <text evidence="1">Belongs to the universal ribosomal protein uS13 family.</text>
</comment>
<evidence type="ECO:0000255" key="1">
    <source>
        <dbReference type="HAMAP-Rule" id="MF_01315"/>
    </source>
</evidence>
<evidence type="ECO:0000256" key="2">
    <source>
        <dbReference type="SAM" id="MobiDB-lite"/>
    </source>
</evidence>
<evidence type="ECO:0000305" key="3"/>